<proteinExistence type="evidence at protein level"/>
<gene>
    <name type="primary">gnptab</name>
    <name type="synonym">gnpta</name>
    <name type="ORF">si:ch211-234f20.3</name>
    <name type="ORF">zgc:122985</name>
</gene>
<keyword id="KW-0002">3D-structure</keyword>
<keyword id="KW-0106">Calcium</keyword>
<keyword id="KW-1015">Disulfide bond</keyword>
<keyword id="KW-0325">Glycoprotein</keyword>
<keyword id="KW-0333">Golgi apparatus</keyword>
<keyword id="KW-0472">Membrane</keyword>
<keyword id="KW-0479">Metal-binding</keyword>
<keyword id="KW-1185">Reference proteome</keyword>
<keyword id="KW-0677">Repeat</keyword>
<keyword id="KW-0735">Signal-anchor</keyword>
<keyword id="KW-0808">Transferase</keyword>
<keyword id="KW-0812">Transmembrane</keyword>
<keyword id="KW-1133">Transmembrane helix</keyword>
<accession>Q5RGJ8</accession>
<accession>Q568G1</accession>
<feature type="chain" id="PRO_0000227883" description="N-acetylglucosamine-1-phosphotransferase subunit alpha">
    <location>
        <begin position="1"/>
        <end position="893"/>
    </location>
</feature>
<feature type="chain" id="PRO_0000227884" description="N-acetylglucosamine-1-phosphotransferase subunit beta">
    <location>
        <begin position="894"/>
        <end position="1219"/>
    </location>
</feature>
<feature type="transmembrane region" description="Helical" evidence="3">
    <location>
        <begin position="27"/>
        <end position="47"/>
    </location>
</feature>
<feature type="transmembrane region" description="Helical" evidence="3">
    <location>
        <begin position="1180"/>
        <end position="1200"/>
    </location>
</feature>
<feature type="repeat" description="LNR 1">
    <location>
        <begin position="443"/>
        <end position="478"/>
    </location>
</feature>
<feature type="repeat" description="LNR 2">
    <location>
        <begin position="508"/>
        <end position="538"/>
    </location>
</feature>
<feature type="domain" description="DMAP1-binding" evidence="6">
    <location>
        <begin position="696"/>
        <end position="804"/>
    </location>
</feature>
<feature type="domain" description="EF-hand" evidence="4">
    <location>
        <begin position="970"/>
        <end position="1005"/>
    </location>
</feature>
<feature type="region of interest" description="Disordered" evidence="7">
    <location>
        <begin position="640"/>
        <end position="666"/>
    </location>
</feature>
<feature type="binding site" evidence="5">
    <location>
        <position position="454"/>
    </location>
    <ligand>
        <name>Ca(2+)</name>
        <dbReference type="ChEBI" id="CHEBI:29108"/>
    </ligand>
</feature>
<feature type="binding site" evidence="5">
    <location>
        <position position="469"/>
    </location>
    <ligand>
        <name>Ca(2+)</name>
        <dbReference type="ChEBI" id="CHEBI:29108"/>
    </ligand>
</feature>
<feature type="binding site" evidence="5">
    <location>
        <position position="472"/>
    </location>
    <ligand>
        <name>Ca(2+)</name>
        <dbReference type="ChEBI" id="CHEBI:29108"/>
    </ligand>
</feature>
<feature type="binding site" evidence="5">
    <location>
        <position position="519"/>
    </location>
    <ligand>
        <name>Ca(2+)</name>
        <dbReference type="ChEBI" id="CHEBI:29108"/>
    </ligand>
</feature>
<feature type="binding site" evidence="5">
    <location>
        <position position="534"/>
    </location>
    <ligand>
        <name>Ca(2+)</name>
        <dbReference type="ChEBI" id="CHEBI:29108"/>
    </ligand>
</feature>
<feature type="binding site" evidence="5">
    <location>
        <position position="537"/>
    </location>
    <ligand>
        <name>Ca(2+)</name>
        <dbReference type="ChEBI" id="CHEBI:29108"/>
    </ligand>
</feature>
<feature type="binding site" evidence="4">
    <location>
        <position position="983"/>
    </location>
    <ligand>
        <name>Ca(2+)</name>
        <dbReference type="ChEBI" id="CHEBI:29108"/>
    </ligand>
</feature>
<feature type="binding site" evidence="4">
    <location>
        <position position="985"/>
    </location>
    <ligand>
        <name>Ca(2+)</name>
        <dbReference type="ChEBI" id="CHEBI:29108"/>
    </ligand>
</feature>
<feature type="binding site" evidence="4">
    <location>
        <position position="987"/>
    </location>
    <ligand>
        <name>Ca(2+)</name>
        <dbReference type="ChEBI" id="CHEBI:29108"/>
    </ligand>
</feature>
<feature type="binding site" evidence="4">
    <location>
        <position position="994"/>
    </location>
    <ligand>
        <name>Ca(2+)</name>
        <dbReference type="ChEBI" id="CHEBI:29108"/>
    </ligand>
</feature>
<feature type="site" description="Cleavage; by mbtps1" evidence="1">
    <location>
        <begin position="893"/>
        <end position="894"/>
    </location>
</feature>
<feature type="glycosylation site" description="N-linked (GlcNAc...) asparagine" evidence="3">
    <location>
        <position position="88"/>
    </location>
</feature>
<feature type="glycosylation site" description="N-linked (GlcNAc...) asparagine" evidence="3">
    <location>
        <position position="119"/>
    </location>
</feature>
<feature type="glycosylation site" description="N-linked (GlcNAc...) asparagine" evidence="3">
    <location>
        <position position="153"/>
    </location>
</feature>
<feature type="glycosylation site" description="N-linked (GlcNAc...) asparagine" evidence="3">
    <location>
        <position position="292"/>
    </location>
</feature>
<feature type="glycosylation site" description="N-linked (GlcNAc...) asparagine" evidence="3">
    <location>
        <position position="381"/>
    </location>
</feature>
<feature type="glycosylation site" description="N-linked (GlcNAc...) asparagine" evidence="3">
    <location>
        <position position="462"/>
    </location>
</feature>
<feature type="glycosylation site" description="N-linked (GlcNAc...) asparagine" evidence="3">
    <location>
        <position position="554"/>
    </location>
</feature>
<feature type="glycosylation site" description="N-linked (GlcNAc...) asparagine" evidence="3">
    <location>
        <position position="610"/>
    </location>
</feature>
<feature type="glycosylation site" description="N-linked (GlcNAc...) asparagine" evidence="3">
    <location>
        <position position="617"/>
    </location>
</feature>
<feature type="glycosylation site" description="N-linked (GlcNAc...) asparagine" evidence="3">
    <location>
        <position position="645"/>
    </location>
</feature>
<feature type="glycosylation site" description="N-linked (GlcNAc...) asparagine" evidence="3">
    <location>
        <position position="696"/>
    </location>
</feature>
<feature type="glycosylation site" description="N-linked (GlcNAc...) asparagine" evidence="3">
    <location>
        <position position="726"/>
    </location>
</feature>
<feature type="glycosylation site" description="N-linked (GlcNAc...) asparagine" evidence="3">
    <location>
        <position position="823"/>
    </location>
</feature>
<feature type="glycosylation site" description="N-linked (GlcNAc...) asparagine" evidence="3">
    <location>
        <position position="974"/>
    </location>
</feature>
<feature type="glycosylation site" description="N-linked (GlcNAc...) asparagine" evidence="3">
    <location>
        <position position="1021"/>
    </location>
</feature>
<feature type="glycosylation site" description="N-linked (GlcNAc...) asparagine" evidence="3">
    <location>
        <position position="1029"/>
    </location>
</feature>
<feature type="glycosylation site" description="N-linked (GlcNAc...) asparagine" evidence="3">
    <location>
        <position position="1094"/>
    </location>
</feature>
<feature type="disulfide bond" evidence="5">
    <location>
        <begin position="443"/>
        <end position="466"/>
    </location>
</feature>
<feature type="disulfide bond" evidence="5">
    <location>
        <begin position="457"/>
        <end position="473"/>
    </location>
</feature>
<feature type="disulfide bond" evidence="5">
    <location>
        <begin position="508"/>
        <end position="531"/>
    </location>
</feature>
<feature type="disulfide bond" evidence="5">
    <location>
        <begin position="522"/>
        <end position="538"/>
    </location>
</feature>
<feature type="mutagenesis site" description="Partial loss of function due to loss of UDP-N-acetylglucosamine-lysosomal-enzyme N-acetylglucosaminephosphotransferase activity toward some substrates." evidence="10">
    <original>C</original>
    <variation>Y</variation>
    <location>
        <position position="447"/>
    </location>
</feature>
<feature type="mutagenesis site" description="Partial loss of function due to loss of UDP-N-acetylglucosamine-lysosomal-enzyme N-acetylglucosaminephosphotransferase activity toward some substrates." evidence="10">
    <original>C</original>
    <variation>S</variation>
    <location>
        <position position="473"/>
    </location>
</feature>
<feature type="mutagenesis site" description="Loss of function due to loss of UDP-N-acetylglucosamine-lysosomal-enzyme N-acetylglucosaminephosphotransferase activity." evidence="9">
    <original>K</original>
    <variation>N</variation>
    <location>
        <position position="729"/>
    </location>
</feature>
<feature type="sequence conflict" description="In Ref. 2; AAH92871." evidence="12" ref="2">
    <original>I</original>
    <variation>T</variation>
    <location>
        <position position="92"/>
    </location>
</feature>
<feature type="sequence conflict" description="In Ref. 2; AAH92871." evidence="12" ref="2">
    <original>A</original>
    <variation>V</variation>
    <location>
        <position position="100"/>
    </location>
</feature>
<feature type="sequence conflict" description="In Ref. 2; AAH92871." evidence="12" ref="2">
    <original>K</original>
    <variation>Q</variation>
    <location>
        <position position="262"/>
    </location>
</feature>
<feature type="sequence conflict" description="In Ref. 2; AAH92871." evidence="12" ref="2">
    <original>S</original>
    <variation>P</variation>
    <location>
        <position position="304"/>
    </location>
</feature>
<feature type="sequence conflict" description="In Ref. 2; AAH92871." evidence="12" ref="2">
    <original>Q</original>
    <variation>QGTA</variation>
    <location>
        <position position="474"/>
    </location>
</feature>
<feature type="sequence conflict" description="In Ref. 2; AAH92871." evidence="12" ref="2">
    <original>D</original>
    <variation>V</variation>
    <location>
        <position position="689"/>
    </location>
</feature>
<feature type="sequence conflict" description="In Ref. 2; AAH92871." evidence="12" ref="2">
    <original>N</original>
    <variation>D</variation>
    <location>
        <position position="712"/>
    </location>
</feature>
<feature type="sequence conflict" description="In Ref. 2; AAH92871." evidence="12" ref="2">
    <original>D</original>
    <variation>A</variation>
    <location>
        <position position="740"/>
    </location>
</feature>
<feature type="sequence conflict" description="In Ref. 2; AAH92871." evidence="12" ref="2">
    <original>H</original>
    <variation>L</variation>
    <location>
        <position position="746"/>
    </location>
</feature>
<feature type="helix" evidence="14">
    <location>
        <begin position="898"/>
        <end position="911"/>
    </location>
</feature>
<feature type="strand" evidence="14">
    <location>
        <begin position="924"/>
        <end position="927"/>
    </location>
</feature>
<feature type="helix" evidence="14">
    <location>
        <begin position="928"/>
        <end position="937"/>
    </location>
</feature>
<feature type="helix" evidence="14">
    <location>
        <begin position="939"/>
        <end position="947"/>
    </location>
</feature>
<feature type="helix" evidence="14">
    <location>
        <begin position="958"/>
        <end position="968"/>
    </location>
</feature>
<feature type="helix" evidence="14">
    <location>
        <begin position="975"/>
        <end position="982"/>
    </location>
</feature>
<feature type="strand" evidence="13">
    <location>
        <begin position="987"/>
        <end position="990"/>
    </location>
</feature>
<feature type="helix" evidence="14">
    <location>
        <begin position="992"/>
        <end position="1001"/>
    </location>
</feature>
<feature type="helix" evidence="14">
    <location>
        <begin position="1009"/>
        <end position="1025"/>
    </location>
</feature>
<feature type="helix" evidence="14">
    <location>
        <begin position="1028"/>
        <end position="1031"/>
    </location>
</feature>
<feature type="helix" evidence="14">
    <location>
        <begin position="1053"/>
        <end position="1057"/>
    </location>
</feature>
<feature type="helix" evidence="14">
    <location>
        <begin position="1060"/>
        <end position="1069"/>
    </location>
</feature>
<feature type="strand" evidence="14">
    <location>
        <begin position="1072"/>
        <end position="1076"/>
    </location>
</feature>
<feature type="strand" evidence="14">
    <location>
        <begin position="1078"/>
        <end position="1081"/>
    </location>
</feature>
<feature type="strand" evidence="14">
    <location>
        <begin position="1086"/>
        <end position="1091"/>
    </location>
</feature>
<feature type="helix" evidence="14">
    <location>
        <begin position="1095"/>
        <end position="1107"/>
    </location>
</feature>
<feature type="strand" evidence="14">
    <location>
        <begin position="1111"/>
        <end position="1117"/>
    </location>
</feature>
<feature type="strand" evidence="13">
    <location>
        <begin position="1121"/>
        <end position="1123"/>
    </location>
</feature>
<feature type="helix" evidence="14">
    <location>
        <begin position="1126"/>
        <end position="1140"/>
    </location>
</feature>
<feature type="helix" evidence="14">
    <location>
        <begin position="1162"/>
        <end position="1169"/>
    </location>
</feature>
<sequence>MLVVNSLLKLLQRQTYTCLSHRYGLYLCFGGLVLMIVSAFQFGEVVVEWSRDQYHVLFDSYRDNVAGKSFQTRLCLPMPIDVVYTWVNGTDINLLKDLRAVRQRLEEEQKALRERLGKNGSEITEAPKGRPECLLSHCIMGPVLVLDPALPANITVKELPTLSAAFSSAKELLQVAKPLHPSSSVTALLFHSHTEAEKAHADALKDLLTHSISRGYLTTDKEAPGLVRMHTLAYLSGFPASLKETEQLRVKLPAVVTSKTKKLQLYSEASIALLHLNTAQDFTDLTQQAKKNLTLDGKELTVSSAFLFWDLTAISQSKQDEDVSASRFEDNEELRYSLRSIEKHAPWVRHIFIVTNGQIPSWLNLDNPRVSVVTHQDIFQNQTHLPTFSSPAIETHIHRIPGLSQKFIYLNDDVMFGKDVWPDDFYSHSKGQKVYLTWPVPNCAEGCPGSWIKDGYCDKACNNSACDWDGGDCQGSSRFGGAGGSVIGGGQPWQFAGGLGGLAGMSFCNQGCANSWLADKFCDQACNVLACGFDVGDCGQDNLNQLHRIVLRRNQTLYTLPQGELRPYFSFSGLANRVSEAHVADNQVLRHTSVANKWKTIHLLLLPGHNATQIHYNITFQSTDHHDFIMTFSVSVDTRELPKSNTSTPVRDKEEEPKPTVATPEPEVPFEAVPKEKQGPKVREQTHGDVQVPVLNETLLPDEVKIELKKLNEKLMSGDITIKGFNLTKAMLLEPYKEKDQFTLKHEKDKEEKQKLSPVAQLQNERAAARVKREKGENVDQLKPVAPSLVPVQIDDVTTKAQSRLFNIEKPHMFHLLSNLKGNLSKERDSDSEGHLRERPTGRRLQFYSDSLNRGFLPWEKRKFFQDLMEEVNRLQTELQYTADRTATGRRLQDTFADSLRYVNRLLNAQFGFTSRKVPAHMPHMIDRLIMQELQDTFPQEFDKTSSHRVRHSEDMQFAFSYFYFLMSAVQQLNISEVFDEIDTDHSGVLSDREIRTLATRIHELPLSLQDLTSLEQMLINCSKSLPSNLTHLHAVSPTQEAYYDPSMPPVTKGLVIHCKPITERIHKAFKDQNKYKFEIMGEEEIAFKMIRTNVSHVVGQLDDIRKNPRKFICLNDNIDHIHKDAGTVKAVLRDFYESMFPLPSQFELPREYRNRFLHMTELQEWRIYRDKLKFWTHCVLVTLVVFTVMSFFAEQLVMLKRWLFPRRRVSKDANPERV</sequence>
<name>GNPTA_DANRE</name>
<evidence type="ECO:0000250" key="1"/>
<evidence type="ECO:0000250" key="2">
    <source>
        <dbReference type="UniProtKB" id="Q3T906"/>
    </source>
</evidence>
<evidence type="ECO:0000255" key="3"/>
<evidence type="ECO:0000255" key="4">
    <source>
        <dbReference type="PROSITE-ProRule" id="PRU00448"/>
    </source>
</evidence>
<evidence type="ECO:0000255" key="5">
    <source>
        <dbReference type="PROSITE-ProRule" id="PRU00525"/>
    </source>
</evidence>
<evidence type="ECO:0000255" key="6">
    <source>
        <dbReference type="PROSITE-ProRule" id="PRU01260"/>
    </source>
</evidence>
<evidence type="ECO:0000256" key="7">
    <source>
        <dbReference type="SAM" id="MobiDB-lite"/>
    </source>
</evidence>
<evidence type="ECO:0000269" key="8">
    <source>
    </source>
</evidence>
<evidence type="ECO:0000269" key="9">
    <source>
    </source>
</evidence>
<evidence type="ECO:0000269" key="10">
    <source>
    </source>
</evidence>
<evidence type="ECO:0000269" key="11">
    <source>
    </source>
</evidence>
<evidence type="ECO:0000305" key="12"/>
<evidence type="ECO:0007829" key="13">
    <source>
        <dbReference type="PDB" id="7S6N"/>
    </source>
</evidence>
<evidence type="ECO:0007829" key="14">
    <source>
        <dbReference type="PDB" id="7SJ2"/>
    </source>
</evidence>
<organism>
    <name type="scientific">Danio rerio</name>
    <name type="common">Zebrafish</name>
    <name type="synonym">Brachydanio rerio</name>
    <dbReference type="NCBI Taxonomy" id="7955"/>
    <lineage>
        <taxon>Eukaryota</taxon>
        <taxon>Metazoa</taxon>
        <taxon>Chordata</taxon>
        <taxon>Craniata</taxon>
        <taxon>Vertebrata</taxon>
        <taxon>Euteleostomi</taxon>
        <taxon>Actinopterygii</taxon>
        <taxon>Neopterygii</taxon>
        <taxon>Teleostei</taxon>
        <taxon>Ostariophysi</taxon>
        <taxon>Cypriniformes</taxon>
        <taxon>Danionidae</taxon>
        <taxon>Danioninae</taxon>
        <taxon>Danio</taxon>
    </lineage>
</organism>
<reference key="1">
    <citation type="journal article" date="2013" name="Nature">
        <title>The zebrafish reference genome sequence and its relationship to the human genome.</title>
        <authorList>
            <person name="Howe K."/>
            <person name="Clark M.D."/>
            <person name="Torroja C.F."/>
            <person name="Torrance J."/>
            <person name="Berthelot C."/>
            <person name="Muffato M."/>
            <person name="Collins J.E."/>
            <person name="Humphray S."/>
            <person name="McLaren K."/>
            <person name="Matthews L."/>
            <person name="McLaren S."/>
            <person name="Sealy I."/>
            <person name="Caccamo M."/>
            <person name="Churcher C."/>
            <person name="Scott C."/>
            <person name="Barrett J.C."/>
            <person name="Koch R."/>
            <person name="Rauch G.J."/>
            <person name="White S."/>
            <person name="Chow W."/>
            <person name="Kilian B."/>
            <person name="Quintais L.T."/>
            <person name="Guerra-Assuncao J.A."/>
            <person name="Zhou Y."/>
            <person name="Gu Y."/>
            <person name="Yen J."/>
            <person name="Vogel J.H."/>
            <person name="Eyre T."/>
            <person name="Redmond S."/>
            <person name="Banerjee R."/>
            <person name="Chi J."/>
            <person name="Fu B."/>
            <person name="Langley E."/>
            <person name="Maguire S.F."/>
            <person name="Laird G.K."/>
            <person name="Lloyd D."/>
            <person name="Kenyon E."/>
            <person name="Donaldson S."/>
            <person name="Sehra H."/>
            <person name="Almeida-King J."/>
            <person name="Loveland J."/>
            <person name="Trevanion S."/>
            <person name="Jones M."/>
            <person name="Quail M."/>
            <person name="Willey D."/>
            <person name="Hunt A."/>
            <person name="Burton J."/>
            <person name="Sims S."/>
            <person name="McLay K."/>
            <person name="Plumb B."/>
            <person name="Davis J."/>
            <person name="Clee C."/>
            <person name="Oliver K."/>
            <person name="Clark R."/>
            <person name="Riddle C."/>
            <person name="Elliot D."/>
            <person name="Threadgold G."/>
            <person name="Harden G."/>
            <person name="Ware D."/>
            <person name="Begum S."/>
            <person name="Mortimore B."/>
            <person name="Kerry G."/>
            <person name="Heath P."/>
            <person name="Phillimore B."/>
            <person name="Tracey A."/>
            <person name="Corby N."/>
            <person name="Dunn M."/>
            <person name="Johnson C."/>
            <person name="Wood J."/>
            <person name="Clark S."/>
            <person name="Pelan S."/>
            <person name="Griffiths G."/>
            <person name="Smith M."/>
            <person name="Glithero R."/>
            <person name="Howden P."/>
            <person name="Barker N."/>
            <person name="Lloyd C."/>
            <person name="Stevens C."/>
            <person name="Harley J."/>
            <person name="Holt K."/>
            <person name="Panagiotidis G."/>
            <person name="Lovell J."/>
            <person name="Beasley H."/>
            <person name="Henderson C."/>
            <person name="Gordon D."/>
            <person name="Auger K."/>
            <person name="Wright D."/>
            <person name="Collins J."/>
            <person name="Raisen C."/>
            <person name="Dyer L."/>
            <person name="Leung K."/>
            <person name="Robertson L."/>
            <person name="Ambridge K."/>
            <person name="Leongamornlert D."/>
            <person name="McGuire S."/>
            <person name="Gilderthorp R."/>
            <person name="Griffiths C."/>
            <person name="Manthravadi D."/>
            <person name="Nichol S."/>
            <person name="Barker G."/>
            <person name="Whitehead S."/>
            <person name="Kay M."/>
            <person name="Brown J."/>
            <person name="Murnane C."/>
            <person name="Gray E."/>
            <person name="Humphries M."/>
            <person name="Sycamore N."/>
            <person name="Barker D."/>
            <person name="Saunders D."/>
            <person name="Wallis J."/>
            <person name="Babbage A."/>
            <person name="Hammond S."/>
            <person name="Mashreghi-Mohammadi M."/>
            <person name="Barr L."/>
            <person name="Martin S."/>
            <person name="Wray P."/>
            <person name="Ellington A."/>
            <person name="Matthews N."/>
            <person name="Ellwood M."/>
            <person name="Woodmansey R."/>
            <person name="Clark G."/>
            <person name="Cooper J."/>
            <person name="Tromans A."/>
            <person name="Grafham D."/>
            <person name="Skuce C."/>
            <person name="Pandian R."/>
            <person name="Andrews R."/>
            <person name="Harrison E."/>
            <person name="Kimberley A."/>
            <person name="Garnett J."/>
            <person name="Fosker N."/>
            <person name="Hall R."/>
            <person name="Garner P."/>
            <person name="Kelly D."/>
            <person name="Bird C."/>
            <person name="Palmer S."/>
            <person name="Gehring I."/>
            <person name="Berger A."/>
            <person name="Dooley C.M."/>
            <person name="Ersan-Urun Z."/>
            <person name="Eser C."/>
            <person name="Geiger H."/>
            <person name="Geisler M."/>
            <person name="Karotki L."/>
            <person name="Kirn A."/>
            <person name="Konantz J."/>
            <person name="Konantz M."/>
            <person name="Oberlander M."/>
            <person name="Rudolph-Geiger S."/>
            <person name="Teucke M."/>
            <person name="Lanz C."/>
            <person name="Raddatz G."/>
            <person name="Osoegawa K."/>
            <person name="Zhu B."/>
            <person name="Rapp A."/>
            <person name="Widaa S."/>
            <person name="Langford C."/>
            <person name="Yang F."/>
            <person name="Schuster S.C."/>
            <person name="Carter N.P."/>
            <person name="Harrow J."/>
            <person name="Ning Z."/>
            <person name="Herrero J."/>
            <person name="Searle S.M."/>
            <person name="Enright A."/>
            <person name="Geisler R."/>
            <person name="Plasterk R.H."/>
            <person name="Lee C."/>
            <person name="Westerfield M."/>
            <person name="de Jong P.J."/>
            <person name="Zon L.I."/>
            <person name="Postlethwait J.H."/>
            <person name="Nusslein-Volhard C."/>
            <person name="Hubbard T.J."/>
            <person name="Roest Crollius H."/>
            <person name="Rogers J."/>
            <person name="Stemple D.L."/>
        </authorList>
    </citation>
    <scope>NUCLEOTIDE SEQUENCE [LARGE SCALE GENOMIC DNA]</scope>
    <source>
        <strain>Tuebingen</strain>
    </source>
</reference>
<reference key="2">
    <citation type="submission" date="2005-04" db="EMBL/GenBank/DDBJ databases">
        <authorList>
            <consortium name="NIH - Zebrafish Gene Collection (ZGC) project"/>
        </authorList>
    </citation>
    <scope>NUCLEOTIDE SEQUENCE [LARGE SCALE MRNA] OF 1-748</scope>
    <source>
        <tissue>Olfactory epithelium</tissue>
    </source>
</reference>
<reference key="3">
    <citation type="journal article" date="2005" name="PLoS Comput. Biol.">
        <title>Stealth proteins: in silico identification of a novel protein family rendering bacterial pathogens invisible to host immune defense.</title>
        <authorList>
            <person name="Sperisen P."/>
            <person name="Schmid C.D."/>
            <person name="Bucher P."/>
            <person name="Zilian O."/>
        </authorList>
    </citation>
    <scope>IDENTIFICATION AS A STEALTH PROTEIN</scope>
    <scope>PREDICTION OF FUNCTION</scope>
</reference>
<reference key="4">
    <citation type="journal article" date="2009" name="Am. J. Pathol.">
        <title>Altered chondrocyte differentiation and extracellular matrix homeostasis in a zebrafish model for mucolipidosis II.</title>
        <authorList>
            <person name="Flanagan-Steet H."/>
            <person name="Sias C."/>
            <person name="Steet R."/>
        </authorList>
    </citation>
    <scope>DISRUPTION PHENOTYPE</scope>
</reference>
<reference key="5">
    <citation type="journal article" date="2013" name="Proc. Natl. Acad. Sci. U.S.A.">
        <title>The DMAP interaction domain of UDP-GlcNAc:lysosomal enzyme N-acetylglucosamine-1-phosphotransferase is a substrate recognition module.</title>
        <authorList>
            <person name="Qian Y."/>
            <person name="Flanagan-Steet H."/>
            <person name="van Meel E."/>
            <person name="Steet R."/>
            <person name="Kornfeld S.A."/>
        </authorList>
    </citation>
    <scope>DISRUPTION PHENOTYPE</scope>
    <scope>MUTAGENESIS OF LYS-729</scope>
</reference>
<reference key="6">
    <citation type="journal article" date="2015" name="J. Biol. Chem.">
        <title>Analysis of mucolipidosis II/III GNPTAB missense mutations identifies domains of UDP-GlcNAc:lysosomal enzyme GlcNAc-1-phosphotransferase involved in catalytic function and lysosomal enzyme recognition.</title>
        <authorList>
            <person name="Qian Y."/>
            <person name="van Meel E."/>
            <person name="Flanagan-Steet H."/>
            <person name="Yox A."/>
            <person name="Steet R."/>
            <person name="Kornfeld S."/>
        </authorList>
    </citation>
    <scope>DISRUPTION PHENOTYPE</scope>
    <scope>MUTAGENESIS OF CYS-447 AND CYS-473</scope>
</reference>
<reference key="7">
    <citation type="journal article" date="2022" name="Nat. Commun.">
        <title>GCAF(TMEM251) regulates lysosome biogenesis by activating the mannose-6-phosphate pathway.</title>
        <authorList>
            <person name="Zhang W."/>
            <person name="Yang X."/>
            <person name="Li Y."/>
            <person name="Yu L."/>
            <person name="Zhang B."/>
            <person name="Zhang J."/>
            <person name="Cho W.J."/>
            <person name="Venkatarangan V."/>
            <person name="Chen L."/>
            <person name="Burugula B.B."/>
            <person name="Bui S."/>
            <person name="Wang Y."/>
            <person name="Duan C."/>
            <person name="Kitzman J.O."/>
            <person name="Li M."/>
        </authorList>
    </citation>
    <scope>DISRUPTION PHENOTYPE</scope>
</reference>
<comment type="function">
    <text evidence="2">Catalyzes the formation of mannose 6-phosphate (M6P) markers on high mannose type oligosaccharides in the Golgi apparatus. M6P residues are required to bind to the M6P receptors (MPR), which mediate the vesicular transport of lysosomal enzymes to the endosomal/prelysosomal compartment.</text>
</comment>
<comment type="catalytic activity">
    <reaction evidence="2">
        <text>N(4)-[alpha-D-mannosyl-(1-&gt;2)-alpha-D-mannosyl-(glycan)]-L-asparaginyl-[protein] + UDP-N-acetyl-alpha-D-glucosamine = N(4)-[6-(N-acetyl-alpha-D-glucosaminyl-1-phospho)-alpha-D-mannosyl-(1-&gt;2)-alpha-D-mannosyl-(glycan)]-L-asparaginyl-[protein] + UMP + H(+)</text>
        <dbReference type="Rhea" id="RHEA:13581"/>
        <dbReference type="Rhea" id="RHEA-COMP:14507"/>
        <dbReference type="Rhea" id="RHEA-COMP:14508"/>
        <dbReference type="ChEBI" id="CHEBI:15378"/>
        <dbReference type="ChEBI" id="CHEBI:57705"/>
        <dbReference type="ChEBI" id="CHEBI:57865"/>
        <dbReference type="ChEBI" id="CHEBI:140357"/>
        <dbReference type="ChEBI" id="CHEBI:140369"/>
        <dbReference type="EC" id="2.7.8.17"/>
    </reaction>
</comment>
<comment type="subunit">
    <text evidence="2">Hexamer of two alpha, two beta and two gamma (GNPTG) subunits; disulfide-linked. The alpha and/or the beta subunits of the enzyme constitute the catalytic subunits.</text>
</comment>
<comment type="subcellular location">
    <molecule>N-acetylglucosamine-1-phosphotransferase subunit alpha</molecule>
    <subcellularLocation>
        <location evidence="2">Golgi apparatus membrane</location>
        <topology evidence="2">Single-pass type I membrane protein</topology>
    </subcellularLocation>
</comment>
<comment type="subcellular location">
    <molecule>N-acetylglucosamine-1-phosphotransferase subunit beta</molecule>
    <subcellularLocation>
        <location evidence="2">Golgi apparatus membrane</location>
        <topology evidence="2">Single-pass type II membrane protein</topology>
    </subcellularLocation>
</comment>
<comment type="domain">
    <text evidence="2">The DMAP1-binding domain mediates substrate recognition. It specifically recognizes a conformation-dependent protein determinant present in acid hydrolases.</text>
</comment>
<comment type="PTM">
    <text evidence="2">The alpha- and beta-subunits are generated by a proteolytic cleavage by mbtps1 protease at the Gln-893-Asp-894 bond.</text>
</comment>
<comment type="disruption phenotype">
    <text evidence="8 9 10 11">Decreased mannose phosphorylation of lysosomal acid hydrolases, craniofacial and cardiac defects. Impaired development of pectoral fins and otic vesicles. Craniofacial defects are due to changes in the timing and localization of both type II collagen and sox9 expression, suggestive of an accelerated chondrocyte differentiation program. Increased level of active cathepsin K (ctsk) 3 days post-fertilization (dpf) because of abnormal processing and activation, leading to morphologic cartilage defects.</text>
</comment>
<comment type="miscellaneous">
    <text>Stealth proteins are part of a protein family that is conserved from bacteria to higher eukaryotes. Family members were first identified in microbes as proteins that help pathogens to elude the host innate immune system. Microbial stealth proteins are most likely involved in the biosynthesis of exopolysaccharides. Stealth proteins are predicted to function as hexose-1-phosphoryltransferases.</text>
</comment>
<comment type="similarity">
    <text evidence="12">Belongs to the stealth family.</text>
</comment>
<comment type="sequence caution" evidence="12">
    <conflict type="miscellaneous discrepancy">
        <sequence resource="EMBL-CDS" id="AAH92871"/>
    </conflict>
    <text>Contaminating sequence. Potential poly-A sequence.</text>
</comment>
<dbReference type="EC" id="2.7.8.17" evidence="2"/>
<dbReference type="EMBL" id="BX890572">
    <property type="protein sequence ID" value="CAI11844.1"/>
    <property type="molecule type" value="Genomic_DNA"/>
</dbReference>
<dbReference type="EMBL" id="BC092871">
    <property type="protein sequence ID" value="AAH92871.1"/>
    <property type="status" value="ALT_SEQ"/>
    <property type="molecule type" value="mRNA"/>
</dbReference>
<dbReference type="RefSeq" id="NP_001038233.1">
    <property type="nucleotide sequence ID" value="NM_001044768.3"/>
</dbReference>
<dbReference type="PDB" id="7S6N">
    <property type="method" value="X-ray"/>
    <property type="resolution" value="2.70 A"/>
    <property type="chains" value="A/B=893-1173"/>
</dbReference>
<dbReference type="PDB" id="7SJ2">
    <property type="method" value="X-ray"/>
    <property type="resolution" value="2.30 A"/>
    <property type="chains" value="A/B=894-1173"/>
</dbReference>
<dbReference type="PDBsum" id="7S6N"/>
<dbReference type="PDBsum" id="7SJ2"/>
<dbReference type="SMR" id="Q5RGJ8"/>
<dbReference type="FunCoup" id="Q5RGJ8">
    <property type="interactions" value="797"/>
</dbReference>
<dbReference type="STRING" id="7955.ENSDARP00000106477"/>
<dbReference type="GlyCosmos" id="Q5RGJ8">
    <property type="glycosylation" value="17 sites, No reported glycans"/>
</dbReference>
<dbReference type="PaxDb" id="7955-ENSDARP00000040444"/>
<dbReference type="Ensembl" id="ENSDART00000121714">
    <property type="protein sequence ID" value="ENSDARP00000106477"/>
    <property type="gene ID" value="ENSDARG00000030153"/>
</dbReference>
<dbReference type="GeneID" id="553365"/>
<dbReference type="KEGG" id="dre:553365"/>
<dbReference type="AGR" id="ZFIN:ZDB-GENE-030131-4714"/>
<dbReference type="CTD" id="79158"/>
<dbReference type="ZFIN" id="ZDB-GENE-030131-4714">
    <property type="gene designation" value="gnptab"/>
</dbReference>
<dbReference type="eggNOG" id="ENOG502QQMR">
    <property type="taxonomic scope" value="Eukaryota"/>
</dbReference>
<dbReference type="HOGENOM" id="CLU_002469_0_0_1"/>
<dbReference type="InParanoid" id="Q5RGJ8"/>
<dbReference type="OMA" id="MIDRVVM"/>
<dbReference type="OrthoDB" id="263283at2759"/>
<dbReference type="PhylomeDB" id="Q5RGJ8"/>
<dbReference type="PRO" id="PR:Q5RGJ8"/>
<dbReference type="Proteomes" id="UP000000437">
    <property type="component" value="Chromosome 4"/>
</dbReference>
<dbReference type="Bgee" id="ENSDARG00000030153">
    <property type="expression patterns" value="Expressed in intestine and 26 other cell types or tissues"/>
</dbReference>
<dbReference type="ExpressionAtlas" id="Q5RGJ8">
    <property type="expression patterns" value="baseline"/>
</dbReference>
<dbReference type="GO" id="GO:0005794">
    <property type="term" value="C:Golgi apparatus"/>
    <property type="evidence" value="ECO:0000250"/>
    <property type="project" value="UniProtKB"/>
</dbReference>
<dbReference type="GO" id="GO:0000139">
    <property type="term" value="C:Golgi membrane"/>
    <property type="evidence" value="ECO:0000250"/>
    <property type="project" value="UniProtKB"/>
</dbReference>
<dbReference type="GO" id="GO:0005509">
    <property type="term" value="F:calcium ion binding"/>
    <property type="evidence" value="ECO:0007669"/>
    <property type="project" value="InterPro"/>
</dbReference>
<dbReference type="GO" id="GO:0003976">
    <property type="term" value="F:UDP-N-acetylglucosamine-lysosomal-enzyme N-acetylglucosaminephosphotransferase activity"/>
    <property type="evidence" value="ECO:0000315"/>
    <property type="project" value="UniProtKB"/>
</dbReference>
<dbReference type="GO" id="GO:0060348">
    <property type="term" value="P:bone development"/>
    <property type="evidence" value="ECO:0000315"/>
    <property type="project" value="ZFIN"/>
</dbReference>
<dbReference type="GO" id="GO:0046835">
    <property type="term" value="P:carbohydrate phosphorylation"/>
    <property type="evidence" value="ECO:0000250"/>
    <property type="project" value="UniProtKB"/>
</dbReference>
<dbReference type="GO" id="GO:0051216">
    <property type="term" value="P:cartilage development"/>
    <property type="evidence" value="ECO:0000315"/>
    <property type="project" value="ZFIN"/>
</dbReference>
<dbReference type="GO" id="GO:0002063">
    <property type="term" value="P:chondrocyte development"/>
    <property type="evidence" value="ECO:0000315"/>
    <property type="project" value="ZFIN"/>
</dbReference>
<dbReference type="GO" id="GO:0048701">
    <property type="term" value="P:embryonic cranial skeleton morphogenesis"/>
    <property type="evidence" value="ECO:0000315"/>
    <property type="project" value="ZFIN"/>
</dbReference>
<dbReference type="GO" id="GO:0048703">
    <property type="term" value="P:embryonic viscerocranium morphogenesis"/>
    <property type="evidence" value="ECO:0000315"/>
    <property type="project" value="ZFIN"/>
</dbReference>
<dbReference type="GO" id="GO:0003007">
    <property type="term" value="P:heart morphogenesis"/>
    <property type="evidence" value="ECO:0000315"/>
    <property type="project" value="ZFIN"/>
</dbReference>
<dbReference type="GO" id="GO:0007040">
    <property type="term" value="P:lysosome organization"/>
    <property type="evidence" value="ECO:0000250"/>
    <property type="project" value="UniProtKB"/>
</dbReference>
<dbReference type="GO" id="GO:0016256">
    <property type="term" value="P:N-glycan processing to lysosome"/>
    <property type="evidence" value="ECO:0000315"/>
    <property type="project" value="UniProtKB"/>
</dbReference>
<dbReference type="CDD" id="cd21599">
    <property type="entry name" value="RRM1_GNPTAB"/>
    <property type="match status" value="1"/>
</dbReference>
<dbReference type="CDD" id="cd21600">
    <property type="entry name" value="RRM2_GNPTAB"/>
    <property type="match status" value="1"/>
</dbReference>
<dbReference type="FunFam" id="3.30.300.320:FF:000002">
    <property type="entry name" value="N-acetylglucosamine-1-phosphotransferase subunits alpha/beta isoform X1"/>
    <property type="match status" value="1"/>
</dbReference>
<dbReference type="Gene3D" id="3.30.300.320">
    <property type="match status" value="1"/>
</dbReference>
<dbReference type="InterPro" id="IPR010506">
    <property type="entry name" value="DMAP1-bd"/>
</dbReference>
<dbReference type="InterPro" id="IPR018247">
    <property type="entry name" value="EF_Hand_1_Ca_BS"/>
</dbReference>
<dbReference type="InterPro" id="IPR002048">
    <property type="entry name" value="EF_hand_dom"/>
</dbReference>
<dbReference type="InterPro" id="IPR041536">
    <property type="entry name" value="GNPTAB_reg"/>
</dbReference>
<dbReference type="InterPro" id="IPR035993">
    <property type="entry name" value="Notch-like_dom_sf"/>
</dbReference>
<dbReference type="InterPro" id="IPR000800">
    <property type="entry name" value="Notch_dom"/>
</dbReference>
<dbReference type="InterPro" id="IPR047141">
    <property type="entry name" value="Stealth"/>
</dbReference>
<dbReference type="InterPro" id="IPR031358">
    <property type="entry name" value="Stealth_CR1"/>
</dbReference>
<dbReference type="InterPro" id="IPR021520">
    <property type="entry name" value="Stealth_CR2"/>
</dbReference>
<dbReference type="InterPro" id="IPR031357">
    <property type="entry name" value="Stealth_CR3"/>
</dbReference>
<dbReference type="InterPro" id="IPR031356">
    <property type="entry name" value="Stealth_CR4"/>
</dbReference>
<dbReference type="PANTHER" id="PTHR24045">
    <property type="match status" value="1"/>
</dbReference>
<dbReference type="PANTHER" id="PTHR24045:SF0">
    <property type="entry name" value="N-ACETYLGLUCOSAMINE-1-PHOSPHOTRANSFERASE SUBUNITS ALPHA_BETA"/>
    <property type="match status" value="1"/>
</dbReference>
<dbReference type="Pfam" id="PF06464">
    <property type="entry name" value="DMAP_binding"/>
    <property type="match status" value="1"/>
</dbReference>
<dbReference type="Pfam" id="PF18440">
    <property type="entry name" value="GlcNAc-1_reg"/>
    <property type="match status" value="1"/>
</dbReference>
<dbReference type="Pfam" id="PF00066">
    <property type="entry name" value="Notch"/>
    <property type="match status" value="2"/>
</dbReference>
<dbReference type="Pfam" id="PF17101">
    <property type="entry name" value="Stealth_CR1"/>
    <property type="match status" value="1"/>
</dbReference>
<dbReference type="Pfam" id="PF11380">
    <property type="entry name" value="Stealth_CR2"/>
    <property type="match status" value="1"/>
</dbReference>
<dbReference type="Pfam" id="PF17102">
    <property type="entry name" value="Stealth_CR3"/>
    <property type="match status" value="1"/>
</dbReference>
<dbReference type="Pfam" id="PF17103">
    <property type="entry name" value="Stealth_CR4"/>
    <property type="match status" value="1"/>
</dbReference>
<dbReference type="SMART" id="SM01137">
    <property type="entry name" value="DMAP_binding"/>
    <property type="match status" value="1"/>
</dbReference>
<dbReference type="SMART" id="SM00004">
    <property type="entry name" value="NL"/>
    <property type="match status" value="2"/>
</dbReference>
<dbReference type="SUPFAM" id="SSF90193">
    <property type="entry name" value="Notch domain"/>
    <property type="match status" value="1"/>
</dbReference>
<dbReference type="PROSITE" id="PS51912">
    <property type="entry name" value="DMAP1_BIND"/>
    <property type="match status" value="1"/>
</dbReference>
<dbReference type="PROSITE" id="PS00018">
    <property type="entry name" value="EF_HAND_1"/>
    <property type="match status" value="1"/>
</dbReference>
<dbReference type="PROSITE" id="PS50222">
    <property type="entry name" value="EF_HAND_2"/>
    <property type="match status" value="1"/>
</dbReference>
<dbReference type="PROSITE" id="PS50258">
    <property type="entry name" value="LNR"/>
    <property type="match status" value="2"/>
</dbReference>
<protein>
    <recommendedName>
        <fullName>N-acetylglucosamine-1-phosphotransferase subunits alpha/beta</fullName>
        <ecNumber evidence="2">2.7.8.17</ecNumber>
    </recommendedName>
    <alternativeName>
        <fullName>GlcNAc-1-phosphotransferase subunits alpha/beta</fullName>
    </alternativeName>
    <alternativeName>
        <fullName>Stealth protein gnptab</fullName>
    </alternativeName>
    <alternativeName>
        <fullName>UDP-N-acetylglucosamine-1-phosphotransferase subunits alpha/beta</fullName>
    </alternativeName>
    <component>
        <recommendedName>
            <fullName>N-acetylglucosamine-1-phosphotransferase subunit alpha</fullName>
        </recommendedName>
    </component>
    <component>
        <recommendedName>
            <fullName>N-acetylglucosamine-1-phosphotransferase subunit beta</fullName>
        </recommendedName>
    </component>
</protein>